<organism>
    <name type="scientific">Influenza A virus (strain A/Memphis/2/1978 H3N2)</name>
    <dbReference type="NCBI Taxonomy" id="383580"/>
    <lineage>
        <taxon>Viruses</taxon>
        <taxon>Riboviria</taxon>
        <taxon>Orthornavirae</taxon>
        <taxon>Negarnaviricota</taxon>
        <taxon>Polyploviricotina</taxon>
        <taxon>Insthoviricetes</taxon>
        <taxon>Articulavirales</taxon>
        <taxon>Orthomyxoviridae</taxon>
        <taxon>Alphainfluenzavirus</taxon>
        <taxon>Alphainfluenzavirus influenzae</taxon>
        <taxon>Influenza A virus</taxon>
    </lineage>
</organism>
<comment type="function">
    <text evidence="1">Plays critical roles in virus replication, from virus entry and uncoating to assembly and budding of the virus particle. M1 binding to ribonucleocapsids (RNPs) in nucleus seems to inhibit viral transcription. Interaction of viral NEP with M1-RNP is thought to promote nuclear export of the complex, which is targeted to the virion assembly site at the apical plasma membrane in polarized epithelial cells. Interactions with NA and HA may bring M1, a non-raft-associated protein, into lipid rafts. Forms a continuous shell on the inner side of the lipid bilayer in virion, where it binds the RNP. During virus entry into cell, the M2 ion channel acidifies the internal virion core, inducing M1 dissociation from the RNP. M1-free RNPs are transported to the nucleus, where viral transcription and replication can take place.</text>
</comment>
<comment type="function">
    <text evidence="1">Determines the virion's shape: spherical or filamentous. Clinical isolates of influenza are characterized by the presence of significant proportion of filamentous virions, whereas after multiple passage on eggs or cell culture, virions have only spherical morphology. Filamentous virions are thought to be important to infect neighboring cells, and spherical virions more suited to spread through aerosol between hosts organisms.</text>
</comment>
<comment type="subunit">
    <text evidence="1">Homodimer and homomultimer. Interacts with NEP. Binds ribonucleocapsid by both interacting with genomic RNA and NP protein. May interact with HA and NA. Cannot bind NP without genomic RNA.</text>
</comment>
<comment type="subcellular location">
    <subcellularLocation>
        <location evidence="1">Virion membrane</location>
        <topology evidence="1">Peripheral membrane protein</topology>
        <orientation evidence="1">Cytoplasmic side</orientation>
    </subcellularLocation>
    <subcellularLocation>
        <location evidence="1">Host nucleus</location>
    </subcellularLocation>
</comment>
<comment type="alternative products">
    <event type="alternative splicing"/>
    <isoform>
        <id>Q2PIM4-1</id>
        <name>M1</name>
        <sequence type="displayed"/>
    </isoform>
    <isoform>
        <id>Q2PIM5-1</id>
        <name>M2</name>
        <sequence type="external"/>
    </isoform>
    <text>Only the first 9 residues are shared by the 2 isoforms.</text>
</comment>
<comment type="miscellaneous">
    <text evidence="1">Most abundant protein in virion. When expressed alone can form virus-like particles in transfected cells.</text>
</comment>
<comment type="similarity">
    <text evidence="1">Belongs to the influenza viruses Matrix protein M1 family.</text>
</comment>
<feature type="chain" id="PRO_0000326303" description="Matrix protein 1">
    <location>
        <begin position="1"/>
        <end position="252"/>
    </location>
</feature>
<feature type="region of interest" description="Membrane-binding" evidence="1">
    <location>
        <begin position="1"/>
        <end position="164"/>
    </location>
</feature>
<feature type="region of interest" description="RNP-binding" evidence="1">
    <location>
        <begin position="165"/>
        <end position="252"/>
    </location>
</feature>
<feature type="short sequence motif" description="Nuclear localization signal" evidence="1">
    <location>
        <begin position="101"/>
        <end position="105"/>
    </location>
</feature>
<keyword id="KW-0025">Alternative splicing</keyword>
<keyword id="KW-1048">Host nucleus</keyword>
<keyword id="KW-0472">Membrane</keyword>
<keyword id="KW-0694">RNA-binding</keyword>
<keyword id="KW-0468">Viral matrix protein</keyword>
<keyword id="KW-0946">Virion</keyword>
<evidence type="ECO:0000255" key="1">
    <source>
        <dbReference type="HAMAP-Rule" id="MF_04068"/>
    </source>
</evidence>
<organismHost>
    <name type="scientific">Aves</name>
    <dbReference type="NCBI Taxonomy" id="8782"/>
</organismHost>
<organismHost>
    <name type="scientific">Cetacea</name>
    <name type="common">whales</name>
    <dbReference type="NCBI Taxonomy" id="9721"/>
</organismHost>
<organismHost>
    <name type="scientific">Homo sapiens</name>
    <name type="common">Human</name>
    <dbReference type="NCBI Taxonomy" id="9606"/>
</organismHost>
<organismHost>
    <name type="scientific">Phocidae</name>
    <name type="common">true seals</name>
    <dbReference type="NCBI Taxonomy" id="9709"/>
</organismHost>
<organismHost>
    <name type="scientific">Sus scrofa</name>
    <name type="common">Pig</name>
    <dbReference type="NCBI Taxonomy" id="9823"/>
</organismHost>
<sequence>MSLLTEVETYVLSIVPSGPLKAEIAQRLEDVFAGKNTDLEALMEWLKTRPILSPLTKGILGFVFTLTVPSERGLQRRRFVQNALNGNGDPNNMDRAVKLYRKLKREITFHGAKEVALSYSAGALASCMGLIYNRMGAVTTEVAFGLVCATCEQIADSQHRSHRQMVATTNPLIRHENRMVLASTTAKAMEQMAGSSEQAAEAMEVASQARQMVQAMRAIGTHPSSSAGLKDDLLENLQAYQKRMGVQMQRFK</sequence>
<protein>
    <recommendedName>
        <fullName evidence="1">Matrix protein 1</fullName>
        <shortName evidence="1">M1</shortName>
    </recommendedName>
</protein>
<accession>Q2PIM4</accession>
<reference key="1">
    <citation type="submission" date="2005-12" db="EMBL/GenBank/DDBJ databases">
        <title>The NIAID influenza genome sequencing project.</title>
        <authorList>
            <person name="Ghedin E."/>
            <person name="Spiro D."/>
            <person name="Miller N."/>
            <person name="Zaborsky J."/>
            <person name="Feldblyum T."/>
            <person name="Subbu V."/>
            <person name="Shumway M."/>
            <person name="Sparenborg J."/>
            <person name="Groveman L."/>
            <person name="Halpin R."/>
            <person name="Sitz J."/>
            <person name="Koo H."/>
            <person name="Salzberg S.L."/>
            <person name="Webster R.G."/>
            <person name="Hoffmann E."/>
            <person name="Krauss S."/>
            <person name="Naeve C."/>
            <person name="Bao Y."/>
            <person name="Bolotov P."/>
            <person name="Dernovoy D."/>
            <person name="Kiryutin B."/>
            <person name="Lipman D.J."/>
            <person name="Tatusova T."/>
        </authorList>
    </citation>
    <scope>NUCLEOTIDE SEQUENCE [GENOMIC RNA]</scope>
    <source>
        <strain>A/Memphis/2/78</strain>
    </source>
</reference>
<gene>
    <name evidence="1" type="primary">M</name>
</gene>
<proteinExistence type="inferred from homology"/>
<dbReference type="EMBL" id="CY006692">
    <property type="protein sequence ID" value="ABB96320.1"/>
    <property type="molecule type" value="Genomic_RNA"/>
</dbReference>
<dbReference type="SMR" id="Q2PIM4"/>
<dbReference type="Proteomes" id="UP000007555">
    <property type="component" value="Genome"/>
</dbReference>
<dbReference type="GO" id="GO:0042025">
    <property type="term" value="C:host cell nucleus"/>
    <property type="evidence" value="ECO:0007669"/>
    <property type="project" value="UniProtKB-SubCell"/>
</dbReference>
<dbReference type="GO" id="GO:0016020">
    <property type="term" value="C:membrane"/>
    <property type="evidence" value="ECO:0007669"/>
    <property type="project" value="UniProtKB-KW"/>
</dbReference>
<dbReference type="GO" id="GO:0055036">
    <property type="term" value="C:virion membrane"/>
    <property type="evidence" value="ECO:0007669"/>
    <property type="project" value="UniProtKB-SubCell"/>
</dbReference>
<dbReference type="GO" id="GO:0003723">
    <property type="term" value="F:RNA binding"/>
    <property type="evidence" value="ECO:0007669"/>
    <property type="project" value="UniProtKB-UniRule"/>
</dbReference>
<dbReference type="GO" id="GO:0039660">
    <property type="term" value="F:structural constituent of virion"/>
    <property type="evidence" value="ECO:0007669"/>
    <property type="project" value="UniProtKB-UniRule"/>
</dbReference>
<dbReference type="GO" id="GO:0046761">
    <property type="term" value="P:viral budding from plasma membrane"/>
    <property type="evidence" value="ECO:0007669"/>
    <property type="project" value="UniProtKB-UniRule"/>
</dbReference>
<dbReference type="FunFam" id="1.10.10.180:FF:000001">
    <property type="entry name" value="Matrix protein 1"/>
    <property type="match status" value="1"/>
</dbReference>
<dbReference type="FunFam" id="1.20.91.10:FF:000001">
    <property type="entry name" value="Matrix protein 1"/>
    <property type="match status" value="1"/>
</dbReference>
<dbReference type="Gene3D" id="1.10.10.180">
    <property type="match status" value="1"/>
</dbReference>
<dbReference type="Gene3D" id="1.20.91.10">
    <property type="match status" value="1"/>
</dbReference>
<dbReference type="HAMAP" id="MF_04068">
    <property type="entry name" value="INFV_M1"/>
    <property type="match status" value="1"/>
</dbReference>
<dbReference type="InterPro" id="IPR036039">
    <property type="entry name" value="Flu_matrix_M1"/>
</dbReference>
<dbReference type="InterPro" id="IPR013188">
    <property type="entry name" value="Flu_matrix_M1_C"/>
</dbReference>
<dbReference type="InterPro" id="IPR001561">
    <property type="entry name" value="Flu_matrix_M1_N"/>
</dbReference>
<dbReference type="InterPro" id="IPR015423">
    <property type="entry name" value="Flu_matrix_M1_N_sub1"/>
</dbReference>
<dbReference type="InterPro" id="IPR015799">
    <property type="entry name" value="Flu_matrix_M1_N_sub2"/>
</dbReference>
<dbReference type="InterPro" id="IPR037533">
    <property type="entry name" value="INFV_M1"/>
</dbReference>
<dbReference type="Pfam" id="PF00598">
    <property type="entry name" value="Flu_M1"/>
    <property type="match status" value="1"/>
</dbReference>
<dbReference type="Pfam" id="PF08289">
    <property type="entry name" value="Flu_M1_C"/>
    <property type="match status" value="1"/>
</dbReference>
<dbReference type="SMART" id="SM00759">
    <property type="entry name" value="Flu_M1_C"/>
    <property type="match status" value="1"/>
</dbReference>
<dbReference type="SUPFAM" id="SSF48145">
    <property type="entry name" value="Influenza virus matrix protein M1"/>
    <property type="match status" value="1"/>
</dbReference>
<name>M1_I78A7</name>